<sequence>MSESSLQNEVAKRRTFAIISHPDAGKTTITEKVLLHGQQIQKAGTIKGKKSGQHAKSDWMQMEQERGISVTTSVMQFPYHNALVNLLDTPGHEDFSEDTYRTLTAVDSCLMVIDGAKGVEDRTIKLMEVTRLRDTPIITFMNKLDRDIRDPLELLDEVEDVLKIMCAPITWPIGSGKNFKGVYHLLKDETILYKTGQGHRIQEETIIKGLDNPELDEKLGVWADELREQIELVNGASNPFDKELFLAGELTPVFFGTALGNFGVDHMLDGLVDWAPKPQGRETDQQEGVSATSEDFSGFIFKIQANMDPRHRDRVAFMRIVSGKYEKGMKMRQVRTGKDVRISDALTFLAGDRSHVEEAYPGDIIGLHNHGTIQIGDTFTAGEDFKFSGIPNFAPELFRRIRLKDPLKQKQLLKGLVQLSEEGAVQVFRPLISNDLIVGAVGVLQFDVVVHRLRTEYKVDAMYENINVATARWVSSKDEKKLDEFRRRAEANLALDGGDNLTYIAPTMVNLSLAEERYPDIEFTHTREH</sequence>
<keyword id="KW-0963">Cytoplasm</keyword>
<keyword id="KW-0342">GTP-binding</keyword>
<keyword id="KW-0547">Nucleotide-binding</keyword>
<keyword id="KW-0648">Protein biosynthesis</keyword>
<keyword id="KW-1185">Reference proteome</keyword>
<proteinExistence type="inferred from homology"/>
<gene>
    <name evidence="1" type="primary">prfC</name>
    <name type="ordered locus">IL1879</name>
</gene>
<name>RF3_IDILO</name>
<protein>
    <recommendedName>
        <fullName evidence="1">Peptide chain release factor 3</fullName>
        <shortName evidence="1">RF-3</shortName>
    </recommendedName>
</protein>
<comment type="function">
    <text evidence="1">Increases the formation of ribosomal termination complexes and stimulates activities of RF-1 and RF-2. It binds guanine nucleotides and has strong preference for UGA stop codons. It may interact directly with the ribosome. The stimulation of RF-1 and RF-2 is significantly reduced by GTP and GDP, but not by GMP.</text>
</comment>
<comment type="subcellular location">
    <subcellularLocation>
        <location evidence="1">Cytoplasm</location>
    </subcellularLocation>
</comment>
<comment type="similarity">
    <text evidence="1">Belongs to the TRAFAC class translation factor GTPase superfamily. Classic translation factor GTPase family. PrfC subfamily.</text>
</comment>
<evidence type="ECO:0000255" key="1">
    <source>
        <dbReference type="HAMAP-Rule" id="MF_00072"/>
    </source>
</evidence>
<dbReference type="EMBL" id="AE017340">
    <property type="protein sequence ID" value="AAV82711.1"/>
    <property type="molecule type" value="Genomic_DNA"/>
</dbReference>
<dbReference type="RefSeq" id="WP_011235111.1">
    <property type="nucleotide sequence ID" value="NC_006512.1"/>
</dbReference>
<dbReference type="SMR" id="Q5QXU1"/>
<dbReference type="STRING" id="283942.IL1879"/>
<dbReference type="GeneID" id="41337063"/>
<dbReference type="KEGG" id="ilo:IL1879"/>
<dbReference type="eggNOG" id="COG4108">
    <property type="taxonomic scope" value="Bacteria"/>
</dbReference>
<dbReference type="HOGENOM" id="CLU_002794_2_1_6"/>
<dbReference type="OrthoDB" id="9804431at2"/>
<dbReference type="Proteomes" id="UP000001171">
    <property type="component" value="Chromosome"/>
</dbReference>
<dbReference type="GO" id="GO:0005829">
    <property type="term" value="C:cytosol"/>
    <property type="evidence" value="ECO:0007669"/>
    <property type="project" value="TreeGrafter"/>
</dbReference>
<dbReference type="GO" id="GO:0005525">
    <property type="term" value="F:GTP binding"/>
    <property type="evidence" value="ECO:0007669"/>
    <property type="project" value="UniProtKB-UniRule"/>
</dbReference>
<dbReference type="GO" id="GO:0003924">
    <property type="term" value="F:GTPase activity"/>
    <property type="evidence" value="ECO:0007669"/>
    <property type="project" value="InterPro"/>
</dbReference>
<dbReference type="GO" id="GO:0097216">
    <property type="term" value="F:guanosine tetraphosphate binding"/>
    <property type="evidence" value="ECO:0007669"/>
    <property type="project" value="UniProtKB-ARBA"/>
</dbReference>
<dbReference type="GO" id="GO:0016150">
    <property type="term" value="F:translation release factor activity, codon nonspecific"/>
    <property type="evidence" value="ECO:0007669"/>
    <property type="project" value="TreeGrafter"/>
</dbReference>
<dbReference type="GO" id="GO:0016149">
    <property type="term" value="F:translation release factor activity, codon specific"/>
    <property type="evidence" value="ECO:0007669"/>
    <property type="project" value="UniProtKB-UniRule"/>
</dbReference>
<dbReference type="GO" id="GO:0006449">
    <property type="term" value="P:regulation of translational termination"/>
    <property type="evidence" value="ECO:0007669"/>
    <property type="project" value="UniProtKB-UniRule"/>
</dbReference>
<dbReference type="CDD" id="cd04169">
    <property type="entry name" value="RF3"/>
    <property type="match status" value="1"/>
</dbReference>
<dbReference type="CDD" id="cd03689">
    <property type="entry name" value="RF3_II"/>
    <property type="match status" value="1"/>
</dbReference>
<dbReference type="CDD" id="cd16259">
    <property type="entry name" value="RF3_III"/>
    <property type="match status" value="1"/>
</dbReference>
<dbReference type="FunFam" id="2.40.30.10:FF:000040">
    <property type="entry name" value="Peptide chain release factor 3"/>
    <property type="match status" value="1"/>
</dbReference>
<dbReference type="FunFam" id="3.30.70.3280:FF:000001">
    <property type="entry name" value="Peptide chain release factor 3"/>
    <property type="match status" value="1"/>
</dbReference>
<dbReference type="FunFam" id="3.40.50.300:FF:000542">
    <property type="entry name" value="Peptide chain release factor 3"/>
    <property type="match status" value="1"/>
</dbReference>
<dbReference type="Gene3D" id="3.40.50.300">
    <property type="entry name" value="P-loop containing nucleotide triphosphate hydrolases"/>
    <property type="match status" value="2"/>
</dbReference>
<dbReference type="Gene3D" id="3.30.70.3280">
    <property type="entry name" value="Peptide chain release factor 3, domain III"/>
    <property type="match status" value="1"/>
</dbReference>
<dbReference type="HAMAP" id="MF_00072">
    <property type="entry name" value="Rel_fac_3"/>
    <property type="match status" value="1"/>
</dbReference>
<dbReference type="InterPro" id="IPR053905">
    <property type="entry name" value="EF-G-like_DII"/>
</dbReference>
<dbReference type="InterPro" id="IPR035647">
    <property type="entry name" value="EFG_III/V"/>
</dbReference>
<dbReference type="InterPro" id="IPR031157">
    <property type="entry name" value="G_TR_CS"/>
</dbReference>
<dbReference type="InterPro" id="IPR027417">
    <property type="entry name" value="P-loop_NTPase"/>
</dbReference>
<dbReference type="InterPro" id="IPR004548">
    <property type="entry name" value="PrfC"/>
</dbReference>
<dbReference type="InterPro" id="IPR032090">
    <property type="entry name" value="RF3_C"/>
</dbReference>
<dbReference type="InterPro" id="IPR038467">
    <property type="entry name" value="RF3_dom_3_sf"/>
</dbReference>
<dbReference type="InterPro" id="IPR041732">
    <property type="entry name" value="RF3_GTP-bd"/>
</dbReference>
<dbReference type="InterPro" id="IPR005225">
    <property type="entry name" value="Small_GTP-bd"/>
</dbReference>
<dbReference type="InterPro" id="IPR000795">
    <property type="entry name" value="T_Tr_GTP-bd_dom"/>
</dbReference>
<dbReference type="InterPro" id="IPR009000">
    <property type="entry name" value="Transl_B-barrel_sf"/>
</dbReference>
<dbReference type="NCBIfam" id="TIGR00503">
    <property type="entry name" value="prfC"/>
    <property type="match status" value="1"/>
</dbReference>
<dbReference type="NCBIfam" id="NF001964">
    <property type="entry name" value="PRK00741.1"/>
    <property type="match status" value="1"/>
</dbReference>
<dbReference type="NCBIfam" id="TIGR00231">
    <property type="entry name" value="small_GTP"/>
    <property type="match status" value="1"/>
</dbReference>
<dbReference type="PANTHER" id="PTHR43556">
    <property type="entry name" value="PEPTIDE CHAIN RELEASE FACTOR RF3"/>
    <property type="match status" value="1"/>
</dbReference>
<dbReference type="PANTHER" id="PTHR43556:SF2">
    <property type="entry name" value="PEPTIDE CHAIN RELEASE FACTOR RF3"/>
    <property type="match status" value="1"/>
</dbReference>
<dbReference type="Pfam" id="PF22042">
    <property type="entry name" value="EF-G_D2"/>
    <property type="match status" value="1"/>
</dbReference>
<dbReference type="Pfam" id="PF00009">
    <property type="entry name" value="GTP_EFTU"/>
    <property type="match status" value="1"/>
</dbReference>
<dbReference type="Pfam" id="PF16658">
    <property type="entry name" value="RF3_C"/>
    <property type="match status" value="1"/>
</dbReference>
<dbReference type="PRINTS" id="PR00315">
    <property type="entry name" value="ELONGATNFCT"/>
</dbReference>
<dbReference type="SUPFAM" id="SSF54980">
    <property type="entry name" value="EF-G C-terminal domain-like"/>
    <property type="match status" value="1"/>
</dbReference>
<dbReference type="SUPFAM" id="SSF52540">
    <property type="entry name" value="P-loop containing nucleoside triphosphate hydrolases"/>
    <property type="match status" value="1"/>
</dbReference>
<dbReference type="SUPFAM" id="SSF50447">
    <property type="entry name" value="Translation proteins"/>
    <property type="match status" value="1"/>
</dbReference>
<dbReference type="PROSITE" id="PS00301">
    <property type="entry name" value="G_TR_1"/>
    <property type="match status" value="1"/>
</dbReference>
<dbReference type="PROSITE" id="PS51722">
    <property type="entry name" value="G_TR_2"/>
    <property type="match status" value="1"/>
</dbReference>
<reference key="1">
    <citation type="journal article" date="2004" name="Proc. Natl. Acad. Sci. U.S.A.">
        <title>Genome sequence of the deep-sea gamma-proteobacterium Idiomarina loihiensis reveals amino acid fermentation as a source of carbon and energy.</title>
        <authorList>
            <person name="Hou S."/>
            <person name="Saw J.H."/>
            <person name="Lee K.S."/>
            <person name="Freitas T.A."/>
            <person name="Belisle C."/>
            <person name="Kawarabayasi Y."/>
            <person name="Donachie S.P."/>
            <person name="Pikina A."/>
            <person name="Galperin M.Y."/>
            <person name="Koonin E.V."/>
            <person name="Makarova K.S."/>
            <person name="Omelchenko M.V."/>
            <person name="Sorokin A."/>
            <person name="Wolf Y.I."/>
            <person name="Li Q.X."/>
            <person name="Keum Y.S."/>
            <person name="Campbell S."/>
            <person name="Denery J."/>
            <person name="Aizawa S."/>
            <person name="Shibata S."/>
            <person name="Malahoff A."/>
            <person name="Alam M."/>
        </authorList>
    </citation>
    <scope>NUCLEOTIDE SEQUENCE [LARGE SCALE GENOMIC DNA]</scope>
    <source>
        <strain>ATCC BAA-735 / DSM 15497 / L2-TR</strain>
    </source>
</reference>
<organism>
    <name type="scientific">Idiomarina loihiensis (strain ATCC BAA-735 / DSM 15497 / L2-TR)</name>
    <dbReference type="NCBI Taxonomy" id="283942"/>
    <lineage>
        <taxon>Bacteria</taxon>
        <taxon>Pseudomonadati</taxon>
        <taxon>Pseudomonadota</taxon>
        <taxon>Gammaproteobacteria</taxon>
        <taxon>Alteromonadales</taxon>
        <taxon>Idiomarinaceae</taxon>
        <taxon>Idiomarina</taxon>
    </lineage>
</organism>
<accession>Q5QXU1</accession>
<feature type="chain" id="PRO_0000242183" description="Peptide chain release factor 3">
    <location>
        <begin position="1"/>
        <end position="529"/>
    </location>
</feature>
<feature type="domain" description="tr-type G">
    <location>
        <begin position="11"/>
        <end position="279"/>
    </location>
</feature>
<feature type="binding site" evidence="1">
    <location>
        <begin position="20"/>
        <end position="27"/>
    </location>
    <ligand>
        <name>GTP</name>
        <dbReference type="ChEBI" id="CHEBI:37565"/>
    </ligand>
</feature>
<feature type="binding site" evidence="1">
    <location>
        <begin position="88"/>
        <end position="92"/>
    </location>
    <ligand>
        <name>GTP</name>
        <dbReference type="ChEBI" id="CHEBI:37565"/>
    </ligand>
</feature>
<feature type="binding site" evidence="1">
    <location>
        <begin position="142"/>
        <end position="145"/>
    </location>
    <ligand>
        <name>GTP</name>
        <dbReference type="ChEBI" id="CHEBI:37565"/>
    </ligand>
</feature>